<reference key="1">
    <citation type="journal article" date="2010" name="Zoology">
        <title>Transcriptome analysis of the venom glands of the Chinese wolf spider Lycosa singoriensis.</title>
        <authorList>
            <person name="Zhang Y."/>
            <person name="Chen J."/>
            <person name="Tang X."/>
            <person name="Wang F."/>
            <person name="Jiang L."/>
            <person name="Xiong X."/>
            <person name="Wang M."/>
            <person name="Rong M."/>
            <person name="Liu Z."/>
            <person name="Liang S."/>
        </authorList>
    </citation>
    <scope>NUCLEOTIDE SEQUENCE [LARGE SCALE MRNA]</scope>
    <source>
        <tissue>Venom gland</tissue>
    </source>
</reference>
<dbReference type="EMBL" id="EU925974">
    <property type="protein sequence ID" value="ACI41306.1"/>
    <property type="molecule type" value="mRNA"/>
</dbReference>
<dbReference type="EMBL" id="FM863978">
    <property type="protein sequence ID" value="CAS03576.1"/>
    <property type="molecule type" value="mRNA"/>
</dbReference>
<dbReference type="SMR" id="B6DCP0"/>
<dbReference type="ArachnoServer" id="AS000923">
    <property type="toxin name" value="U1-lycotoxin-Ls1ii"/>
</dbReference>
<dbReference type="GO" id="GO:0005576">
    <property type="term" value="C:extracellular region"/>
    <property type="evidence" value="ECO:0007669"/>
    <property type="project" value="UniProtKB-SubCell"/>
</dbReference>
<dbReference type="GO" id="GO:0090729">
    <property type="term" value="F:toxin activity"/>
    <property type="evidence" value="ECO:0007669"/>
    <property type="project" value="UniProtKB-KW"/>
</dbReference>
<dbReference type="InterPro" id="IPR019553">
    <property type="entry name" value="Spider_toxin_CSTX_knottin"/>
</dbReference>
<dbReference type="InterPro" id="IPR011142">
    <property type="entry name" value="Spider_toxin_CSTX_Knottin_CS"/>
</dbReference>
<dbReference type="Pfam" id="PF10530">
    <property type="entry name" value="Toxin_35"/>
    <property type="match status" value="1"/>
</dbReference>
<dbReference type="PROSITE" id="PS60029">
    <property type="entry name" value="SPIDER_CSTX"/>
    <property type="match status" value="1"/>
</dbReference>
<keyword id="KW-1015">Disulfide bond</keyword>
<keyword id="KW-0960">Knottin</keyword>
<keyword id="KW-0964">Secreted</keyword>
<keyword id="KW-0732">Signal</keyword>
<keyword id="KW-0800">Toxin</keyword>
<sequence>MKFVLLFGVLLVTLFSYSSAEMLDDFDQADEDELLSLIEKEEARKDCIPKHHECTSNKHGCCRGHLFKYKCQCTTVVTQSGEETERCFCGTPPHHKAAELVVGFGKKIFG</sequence>
<evidence type="ECO:0000250" key="1"/>
<evidence type="ECO:0000255" key="2"/>
<evidence type="ECO:0000305" key="3"/>
<organism>
    <name type="scientific">Lycosa singoriensis</name>
    <name type="common">Wolf spider</name>
    <name type="synonym">Aranea singoriensis</name>
    <dbReference type="NCBI Taxonomy" id="434756"/>
    <lineage>
        <taxon>Eukaryota</taxon>
        <taxon>Metazoa</taxon>
        <taxon>Ecdysozoa</taxon>
        <taxon>Arthropoda</taxon>
        <taxon>Chelicerata</taxon>
        <taxon>Arachnida</taxon>
        <taxon>Araneae</taxon>
        <taxon>Araneomorphae</taxon>
        <taxon>Entelegynae</taxon>
        <taxon>Lycosoidea</taxon>
        <taxon>Lycosidae</taxon>
        <taxon>Lycosa</taxon>
    </lineage>
</organism>
<proteinExistence type="evidence at transcript level"/>
<name>TX151_LYCSI</name>
<accession>B6DCP0</accession>
<comment type="subcellular location">
    <subcellularLocation>
        <location evidence="1">Secreted</location>
    </subcellularLocation>
</comment>
<comment type="tissue specificity">
    <text>Expressed by the venom gland.</text>
</comment>
<comment type="domain">
    <text evidence="1">The presence of a 'disulfide through disulfide knot' structurally defines this protein as a knottin.</text>
</comment>
<comment type="similarity">
    <text evidence="3">Belongs to the neurotoxin 19 (CSTX) family. 03 subfamily.</text>
</comment>
<protein>
    <recommendedName>
        <fullName>U1-lycotoxin-Ls1ii</fullName>
    </recommendedName>
    <alternativeName>
        <fullName>Toxin-like structure LSTX-A51</fullName>
    </alternativeName>
</protein>
<feature type="signal peptide" evidence="2">
    <location>
        <begin position="1"/>
        <end position="20"/>
    </location>
</feature>
<feature type="propeptide" id="PRO_0000401597" evidence="1">
    <location>
        <begin position="21"/>
        <end position="44"/>
    </location>
</feature>
<feature type="chain" id="PRO_0000401598" description="U1-lycotoxin-Ls1ii">
    <location>
        <begin position="45"/>
        <end position="110"/>
    </location>
</feature>
<feature type="disulfide bond" evidence="1">
    <location>
        <begin position="47"/>
        <end position="62"/>
    </location>
</feature>
<feature type="disulfide bond" evidence="1">
    <location>
        <begin position="54"/>
        <end position="71"/>
    </location>
</feature>
<feature type="disulfide bond" evidence="1">
    <location>
        <begin position="61"/>
        <end position="89"/>
    </location>
</feature>
<feature type="disulfide bond" evidence="1">
    <location>
        <begin position="73"/>
        <end position="87"/>
    </location>
</feature>